<organism>
    <name type="scientific">Corynebacterium glutamicum (strain ATCC 13032 / DSM 20300 / JCM 1318 / BCRC 11384 / CCUG 27702 / LMG 3730 / NBRC 12168 / NCIMB 10025 / NRRL B-2784 / 534)</name>
    <dbReference type="NCBI Taxonomy" id="196627"/>
    <lineage>
        <taxon>Bacteria</taxon>
        <taxon>Bacillati</taxon>
        <taxon>Actinomycetota</taxon>
        <taxon>Actinomycetes</taxon>
        <taxon>Mycobacteriales</taxon>
        <taxon>Corynebacteriaceae</taxon>
        <taxon>Corynebacterium</taxon>
    </lineage>
</organism>
<proteinExistence type="inferred from homology"/>
<protein>
    <recommendedName>
        <fullName evidence="1">Tryptophan synthase alpha chain</fullName>
        <ecNumber evidence="1">4.2.1.20</ecNumber>
    </recommendedName>
</protein>
<feature type="chain" id="PRO_0000098773" description="Tryptophan synthase alpha chain">
    <location>
        <begin position="1"/>
        <end position="280"/>
    </location>
</feature>
<feature type="active site" description="Proton acceptor" evidence="1">
    <location>
        <position position="49"/>
    </location>
</feature>
<feature type="active site" description="Proton acceptor" evidence="1">
    <location>
        <position position="60"/>
    </location>
</feature>
<feature type="sequence conflict" description="In Ref. 1; CAA28628." evidence="2" ref="1">
    <original>ARLDTA</original>
    <variation>GDASTRS</variation>
    <location>
        <begin position="9"/>
        <end position="14"/>
    </location>
</feature>
<feature type="sequence conflict" description="In Ref. 1; CAA28628." evidence="2" ref="1">
    <original>A</original>
    <variation>R</variation>
    <location>
        <position position="43"/>
    </location>
</feature>
<feature type="sequence conflict" description="In Ref. 1." evidence="2" ref="1">
    <location>
        <begin position="142"/>
        <end position="144"/>
    </location>
</feature>
<feature type="sequence conflict" description="In Ref. 1 and 4." evidence="2" ref="1 4">
    <original>MKAATKKV</original>
    <variation>TEGSDQEGLGL</variation>
    <location>
        <begin position="273"/>
        <end position="280"/>
    </location>
</feature>
<dbReference type="EC" id="4.2.1.20" evidence="1"/>
<dbReference type="EMBL" id="X04960">
    <property type="protein sequence ID" value="CAA28628.1"/>
    <property type="molecule type" value="Genomic_DNA"/>
</dbReference>
<dbReference type="EMBL" id="BA000036">
    <property type="protein sequence ID" value="BAC00429.1"/>
    <property type="molecule type" value="Genomic_DNA"/>
</dbReference>
<dbReference type="EMBL" id="BX927157">
    <property type="protein sequence ID" value="CAF18975.1"/>
    <property type="molecule type" value="Genomic_DNA"/>
</dbReference>
<dbReference type="EMBL" id="AH003259">
    <property type="protein sequence ID" value="AAA83990.1"/>
    <property type="molecule type" value="Genomic_DNA"/>
</dbReference>
<dbReference type="PIR" id="G24723">
    <property type="entry name" value="G24723"/>
</dbReference>
<dbReference type="RefSeq" id="NP_602228.1">
    <property type="nucleotide sequence ID" value="NC_003450.3"/>
</dbReference>
<dbReference type="RefSeq" id="WP_004567954.1">
    <property type="nucleotide sequence ID" value="NC_006958.1"/>
</dbReference>
<dbReference type="SMR" id="P06562"/>
<dbReference type="STRING" id="196627.cg3364"/>
<dbReference type="GeneID" id="1020978"/>
<dbReference type="KEGG" id="cgb:cg3364"/>
<dbReference type="KEGG" id="cgl:Cgl3035"/>
<dbReference type="PATRIC" id="fig|196627.13.peg.2969"/>
<dbReference type="eggNOG" id="COG0159">
    <property type="taxonomic scope" value="Bacteria"/>
</dbReference>
<dbReference type="HOGENOM" id="CLU_016734_0_4_11"/>
<dbReference type="OrthoDB" id="9804578at2"/>
<dbReference type="BioCyc" id="CORYNE:G18NG-12656-MONOMER"/>
<dbReference type="UniPathway" id="UPA00035">
    <property type="reaction ID" value="UER00044"/>
</dbReference>
<dbReference type="Proteomes" id="UP000000582">
    <property type="component" value="Chromosome"/>
</dbReference>
<dbReference type="Proteomes" id="UP000001009">
    <property type="component" value="Chromosome"/>
</dbReference>
<dbReference type="GO" id="GO:0005829">
    <property type="term" value="C:cytosol"/>
    <property type="evidence" value="ECO:0007669"/>
    <property type="project" value="TreeGrafter"/>
</dbReference>
<dbReference type="GO" id="GO:0004834">
    <property type="term" value="F:tryptophan synthase activity"/>
    <property type="evidence" value="ECO:0007669"/>
    <property type="project" value="UniProtKB-UniRule"/>
</dbReference>
<dbReference type="CDD" id="cd04724">
    <property type="entry name" value="Tryptophan_synthase_alpha"/>
    <property type="match status" value="1"/>
</dbReference>
<dbReference type="FunFam" id="3.20.20.70:FF:000037">
    <property type="entry name" value="Tryptophan synthase alpha chain"/>
    <property type="match status" value="1"/>
</dbReference>
<dbReference type="Gene3D" id="3.20.20.70">
    <property type="entry name" value="Aldolase class I"/>
    <property type="match status" value="1"/>
</dbReference>
<dbReference type="HAMAP" id="MF_00131">
    <property type="entry name" value="Trp_synth_alpha"/>
    <property type="match status" value="1"/>
</dbReference>
<dbReference type="InterPro" id="IPR013785">
    <property type="entry name" value="Aldolase_TIM"/>
</dbReference>
<dbReference type="InterPro" id="IPR011060">
    <property type="entry name" value="RibuloseP-bd_barrel"/>
</dbReference>
<dbReference type="InterPro" id="IPR018204">
    <property type="entry name" value="Trp_synthase_alpha_AS"/>
</dbReference>
<dbReference type="InterPro" id="IPR002028">
    <property type="entry name" value="Trp_synthase_suA"/>
</dbReference>
<dbReference type="NCBIfam" id="TIGR00262">
    <property type="entry name" value="trpA"/>
    <property type="match status" value="1"/>
</dbReference>
<dbReference type="PANTHER" id="PTHR43406:SF1">
    <property type="entry name" value="TRYPTOPHAN SYNTHASE ALPHA CHAIN, CHLOROPLASTIC"/>
    <property type="match status" value="1"/>
</dbReference>
<dbReference type="PANTHER" id="PTHR43406">
    <property type="entry name" value="TRYPTOPHAN SYNTHASE, ALPHA CHAIN"/>
    <property type="match status" value="1"/>
</dbReference>
<dbReference type="Pfam" id="PF00290">
    <property type="entry name" value="Trp_syntA"/>
    <property type="match status" value="1"/>
</dbReference>
<dbReference type="SUPFAM" id="SSF51366">
    <property type="entry name" value="Ribulose-phoshate binding barrel"/>
    <property type="match status" value="1"/>
</dbReference>
<dbReference type="PROSITE" id="PS00167">
    <property type="entry name" value="TRP_SYNTHASE_ALPHA"/>
    <property type="match status" value="1"/>
</dbReference>
<gene>
    <name evidence="1" type="primary">trpA</name>
    <name type="ordered locus">Cgl3035</name>
    <name type="ordered locus">cg3364</name>
</gene>
<evidence type="ECO:0000255" key="1">
    <source>
        <dbReference type="HAMAP-Rule" id="MF_00131"/>
    </source>
</evidence>
<evidence type="ECO:0000305" key="2"/>
<accession>P06562</accession>
<keyword id="KW-0028">Amino-acid biosynthesis</keyword>
<keyword id="KW-0057">Aromatic amino acid biosynthesis</keyword>
<keyword id="KW-0456">Lyase</keyword>
<keyword id="KW-1185">Reference proteome</keyword>
<keyword id="KW-0822">Tryptophan biosynthesis</keyword>
<reference key="1">
    <citation type="journal article" date="1986" name="Nucleic Acids Res.">
        <title>Complete nucleotide and deduced amino acid sequences of the Brevibacterium lactofermentum tryptophan operon.</title>
        <authorList>
            <person name="Matsui K."/>
            <person name="Sano K."/>
            <person name="Ohtsubo E."/>
        </authorList>
    </citation>
    <scope>NUCLEOTIDE SEQUENCE [GENOMIC DNA]</scope>
</reference>
<reference key="2">
    <citation type="journal article" date="2003" name="Appl. Microbiol. Biotechnol.">
        <title>The Corynebacterium glutamicum genome: features and impacts on biotechnological processes.</title>
        <authorList>
            <person name="Ikeda M."/>
            <person name="Nakagawa S."/>
        </authorList>
    </citation>
    <scope>NUCLEOTIDE SEQUENCE [LARGE SCALE GENOMIC DNA]</scope>
    <source>
        <strain>ATCC 13032 / DSM 20300 / JCM 1318 / BCRC 11384 / CCUG 27702 / LMG 3730 / NBRC 12168 / NCIMB 10025 / NRRL B-2784 / 534</strain>
    </source>
</reference>
<reference key="3">
    <citation type="journal article" date="2003" name="J. Biotechnol.">
        <title>The complete Corynebacterium glutamicum ATCC 13032 genome sequence and its impact on the production of L-aspartate-derived amino acids and vitamins.</title>
        <authorList>
            <person name="Kalinowski J."/>
            <person name="Bathe B."/>
            <person name="Bartels D."/>
            <person name="Bischoff N."/>
            <person name="Bott M."/>
            <person name="Burkovski A."/>
            <person name="Dusch N."/>
            <person name="Eggeling L."/>
            <person name="Eikmanns B.J."/>
            <person name="Gaigalat L."/>
            <person name="Goesmann A."/>
            <person name="Hartmann M."/>
            <person name="Huthmacher K."/>
            <person name="Kraemer R."/>
            <person name="Linke B."/>
            <person name="McHardy A.C."/>
            <person name="Meyer F."/>
            <person name="Moeckel B."/>
            <person name="Pfefferle W."/>
            <person name="Puehler A."/>
            <person name="Rey D.A."/>
            <person name="Rueckert C."/>
            <person name="Rupp O."/>
            <person name="Sahm H."/>
            <person name="Wendisch V.F."/>
            <person name="Wiegraebe I."/>
            <person name="Tauch A."/>
        </authorList>
    </citation>
    <scope>NUCLEOTIDE SEQUENCE [LARGE SCALE GENOMIC DNA]</scope>
    <source>
        <strain>ATCC 13032 / DSM 20300 / JCM 1318 / BCRC 11384 / CCUG 27702 / LMG 3730 / NBRC 12168 / NCIMB 10025 / NRRL B-2784 / 534</strain>
    </source>
</reference>
<reference key="4">
    <citation type="journal article" date="1987" name="Gene">
        <title>Structure and function of the trp operon control regions of Brevibacterium lactofermentum, a glutamic-acid-producing bacterium.</title>
        <authorList>
            <person name="Sano K."/>
            <person name="Matsui K."/>
        </authorList>
    </citation>
    <scope>NUCLEOTIDE SEQUENCE [GENOMIC DNA] OF 163-280</scope>
</reference>
<name>TRPA_CORGL</name>
<sequence>MSRYDDLFARLDTAGEGAFVPFIMLSDPSPEEAFQIISTAIEAGADALELGVPFSDPVADGPTVAESHLRALDGGATVDSALEQIKRVRAAYPEVPIGMLIYGNVPFTRGLDRFYQEFAEAGADSILLPDVPVREGAPFSAAAAAAGIDPIYIAPANASEKTLEGVSAASKGYIYAISRDGVTGTERESSTDGLSAVVDNIKKFDGAPILLGFGISSPQHVADAIAAGASGAITGSAITKIIASHCEGEHPNPSTIRDMDGLKKDLTEFISAMKAATKKV</sequence>
<comment type="function">
    <text evidence="1">The alpha subunit is responsible for the aldol cleavage of indoleglycerol phosphate to indole and glyceraldehyde 3-phosphate.</text>
</comment>
<comment type="catalytic activity">
    <reaction evidence="1">
        <text>(1S,2R)-1-C-(indol-3-yl)glycerol 3-phosphate + L-serine = D-glyceraldehyde 3-phosphate + L-tryptophan + H2O</text>
        <dbReference type="Rhea" id="RHEA:10532"/>
        <dbReference type="ChEBI" id="CHEBI:15377"/>
        <dbReference type="ChEBI" id="CHEBI:33384"/>
        <dbReference type="ChEBI" id="CHEBI:57912"/>
        <dbReference type="ChEBI" id="CHEBI:58866"/>
        <dbReference type="ChEBI" id="CHEBI:59776"/>
        <dbReference type="EC" id="4.2.1.20"/>
    </reaction>
</comment>
<comment type="pathway">
    <text evidence="1">Amino-acid biosynthesis; L-tryptophan biosynthesis; L-tryptophan from chorismate: step 5/5.</text>
</comment>
<comment type="subunit">
    <text evidence="1">Tetramer of two alpha and two beta chains.</text>
</comment>
<comment type="similarity">
    <text evidence="1">Belongs to the TrpA family.</text>
</comment>